<name>PTP1_CAEEL</name>
<feature type="chain" id="PRO_0000219442" description="Tyrosine-protein phosphatase 1">
    <location>
        <begin position="1"/>
        <end position="1026"/>
    </location>
</feature>
<feature type="domain" description="FERM" evidence="2">
    <location>
        <begin position="29"/>
        <end position="315"/>
    </location>
</feature>
<feature type="domain" description="PDZ" evidence="3">
    <location>
        <begin position="617"/>
        <end position="689"/>
    </location>
</feature>
<feature type="domain" description="Tyrosine-protein phosphatase" evidence="4">
    <location>
        <begin position="753"/>
        <end position="1011"/>
    </location>
</feature>
<feature type="region of interest" description="Disordered" evidence="6">
    <location>
        <begin position="376"/>
        <end position="396"/>
    </location>
</feature>
<feature type="region of interest" description="Disordered" evidence="6">
    <location>
        <begin position="430"/>
        <end position="456"/>
    </location>
</feature>
<feature type="region of interest" description="Disordered" evidence="6">
    <location>
        <begin position="489"/>
        <end position="515"/>
    </location>
</feature>
<feature type="region of interest" description="Disordered" evidence="6">
    <location>
        <begin position="584"/>
        <end position="616"/>
    </location>
</feature>
<feature type="compositionally biased region" description="Polar residues" evidence="6">
    <location>
        <begin position="446"/>
        <end position="456"/>
    </location>
</feature>
<feature type="compositionally biased region" description="Low complexity" evidence="6">
    <location>
        <begin position="600"/>
        <end position="609"/>
    </location>
</feature>
<feature type="active site" description="Phosphocysteine intermediate" evidence="4 5">
    <location>
        <position position="952"/>
    </location>
</feature>
<feature type="binding site" evidence="1">
    <location>
        <position position="920"/>
    </location>
    <ligand>
        <name>substrate</name>
    </ligand>
</feature>
<feature type="binding site" evidence="1">
    <location>
        <begin position="952"/>
        <end position="958"/>
    </location>
    <ligand>
        <name>substrate</name>
    </ligand>
</feature>
<feature type="binding site" evidence="1">
    <location>
        <position position="996"/>
    </location>
    <ligand>
        <name>substrate</name>
    </ligand>
</feature>
<feature type="splice variant" id="VSP_020641" description="In isoform b." evidence="7">
    <original>MRLGSNSYDVQRTEAIGQTPVKTPPPNQIRCTVTFLDSTSYHFEI</original>
    <variation>MEVPAFVGKACLKLKGLCVNVWTATVATCQENAEIDEKLPPRAFR</variation>
    <location>
        <begin position="1"/>
        <end position="45"/>
    </location>
</feature>
<feature type="splice variant" id="VSP_020642" description="In isoform c." evidence="7">
    <original>LGSNSYD</original>
    <variation>RRRTART</variation>
    <location>
        <begin position="3"/>
        <end position="9"/>
    </location>
</feature>
<feature type="splice variant" id="VSP_020643" description="In isoform c." evidence="7">
    <location>
        <begin position="10"/>
        <end position="446"/>
    </location>
</feature>
<feature type="splice variant" id="VSP_020644" description="In isoform b." evidence="7">
    <location>
        <begin position="46"/>
        <end position="447"/>
    </location>
</feature>
<sequence>MRLGSNSYDVQRTEAIGQTPVKTPPPNQIRCTVTFLDSTSYHFEIEKNSLGIVLLEKVFNYLEIIEKDYFGLVFIAVDNSSAQQKKWLDPSKNLRKQMICPPYHLFFRVKFYVRDPNRLRDEFTRFQFYQQVRQNLEEGRLPCNEGSLALLASYVVQAEVGDFEEKTHGMSRTCLCYKIQFATLPDDFSDRVAELHQLHIGQTPDVAEQNFLDHARRLEMYGMDVYDGVDANHLPIEIGVGAVGIKVFHEGIKMNEYAWVRIRKLSFKKKQFQVLVANEDGVSETIMIFNIMSAKICKLLWKCCIEQHTFFRLKTPPKTPQRKVFNFGSKFRYSGRTEYQTLEENEHRKSAGHRNFHRSLSKSSFLRSTFSGNTQSIDSSRYTNTTTTDSPELPSSGQLLARRLLSAARHDTDSSDALGYASDGAVVCAPLTTPLSPRRTRDYATDSESSAPSLRQQRLSKEAIYYGTQESCDEKSWTPSMACTSTSPGIHASTASVRPVSSGSTPNGASRKSANSGYSGYGYATQTQQPTSTTNASYSPYLNGTISRSSGAAVAKAAARGLPPTNQQAYNTSSPRNSVASYSSFASAGIGGSPPRSKRSPQSNKSSSPVGEDQVVTIKMRPDRHGRFGFNVKGGADQNYPVIVSRVAPGSSADKCQPRLNEGDQVLFIDGRDVSTMSHDHVVQFIRSARSGLNGGELHLTIRPNVYRLGEEVDEPDSTMVPEPARVADSVPNSDKLSKSLQLLADSLNSGKVVDHFEMLYRKKPGMSMNICRLTANLAKNRYRDVCPYDDTRVTLQASPSGDYINANYVNMEIPSSGIVNRYIACQGPLAHTSSDFWVMVWEQHCTTIVMLTTITERGRVKCHQYWPRVFETQEYGRLMIKCIKDKQTTNCCYREFSIRDRNSSEERRVTQMQYIAWPDHGVPDDPKHFIQFVDEVRKARQGSVDPIVVHCSAGIGRTGVLILMETAACLVESNEPVYPLDIVRTMRDQRAMLIQTPGQYTFVCESILRAYHDGTIKPLAEYSKR</sequence>
<reference key="1">
    <citation type="journal article" date="1998" name="Science">
        <title>Genome sequence of the nematode C. elegans: a platform for investigating biology.</title>
        <authorList>
            <consortium name="The C. elegans sequencing consortium"/>
        </authorList>
    </citation>
    <scope>NUCLEOTIDE SEQUENCE [LARGE SCALE GENOMIC DNA]</scope>
    <scope>ALTERNATIVE SPLICING</scope>
    <source>
        <strain>Bristol N2</strain>
    </source>
</reference>
<reference key="2">
    <citation type="journal article" date="1991" name="Immunogenetics">
        <title>Protein tyrosine phosphatase domains from the protochordate Styela plicata.</title>
        <authorList>
            <person name="Matthews R.J."/>
            <person name="Flores E."/>
            <person name="Thomas M.L."/>
        </authorList>
    </citation>
    <scope>NUCLEOTIDE SEQUENCE [MRNA] OF 844-950</scope>
</reference>
<gene>
    <name type="primary">ptp-1</name>
    <name type="ORF">C48D5.2</name>
</gene>
<organism>
    <name type="scientific">Caenorhabditis elegans</name>
    <dbReference type="NCBI Taxonomy" id="6239"/>
    <lineage>
        <taxon>Eukaryota</taxon>
        <taxon>Metazoa</taxon>
        <taxon>Ecdysozoa</taxon>
        <taxon>Nematoda</taxon>
        <taxon>Chromadorea</taxon>
        <taxon>Rhabditida</taxon>
        <taxon>Rhabditina</taxon>
        <taxon>Rhabditomorpha</taxon>
        <taxon>Rhabditoidea</taxon>
        <taxon>Rhabditidae</taxon>
        <taxon>Peloderinae</taxon>
        <taxon>Caenorhabditis</taxon>
    </lineage>
</organism>
<evidence type="ECO:0000250" key="1"/>
<evidence type="ECO:0000255" key="2">
    <source>
        <dbReference type="PROSITE-ProRule" id="PRU00084"/>
    </source>
</evidence>
<evidence type="ECO:0000255" key="3">
    <source>
        <dbReference type="PROSITE-ProRule" id="PRU00143"/>
    </source>
</evidence>
<evidence type="ECO:0000255" key="4">
    <source>
        <dbReference type="PROSITE-ProRule" id="PRU00160"/>
    </source>
</evidence>
<evidence type="ECO:0000255" key="5">
    <source>
        <dbReference type="PROSITE-ProRule" id="PRU10044"/>
    </source>
</evidence>
<evidence type="ECO:0000256" key="6">
    <source>
        <dbReference type="SAM" id="MobiDB-lite"/>
    </source>
</evidence>
<evidence type="ECO:0000305" key="7"/>
<proteinExistence type="evidence at transcript level"/>
<comment type="catalytic activity">
    <reaction evidence="5">
        <text>O-phospho-L-tyrosyl-[protein] + H2O = L-tyrosyl-[protein] + phosphate</text>
        <dbReference type="Rhea" id="RHEA:10684"/>
        <dbReference type="Rhea" id="RHEA-COMP:10136"/>
        <dbReference type="Rhea" id="RHEA-COMP:20101"/>
        <dbReference type="ChEBI" id="CHEBI:15377"/>
        <dbReference type="ChEBI" id="CHEBI:43474"/>
        <dbReference type="ChEBI" id="CHEBI:46858"/>
        <dbReference type="ChEBI" id="CHEBI:61978"/>
        <dbReference type="EC" id="3.1.3.48"/>
    </reaction>
</comment>
<comment type="subcellular location">
    <subcellularLocation>
        <location evidence="1">Cytoplasm</location>
        <location evidence="1">Cytoskeleton</location>
    </subcellularLocation>
</comment>
<comment type="alternative products">
    <event type="alternative splicing"/>
    <isoform>
        <id>P28191-1</id>
        <name>a</name>
        <sequence type="displayed"/>
    </isoform>
    <isoform>
        <id>P28191-2</id>
        <name>b</name>
        <sequence type="described" ref="VSP_020641 VSP_020644"/>
    </isoform>
    <isoform>
        <id>P28191-3</id>
        <name>c</name>
        <sequence type="described" ref="VSP_020642 VSP_020643"/>
    </isoform>
</comment>
<comment type="similarity">
    <text evidence="7">Belongs to the protein-tyrosine phosphatase family. Non-receptor class subfamily.</text>
</comment>
<accession>P28191</accession>
<accession>P45449</accession>
<accession>Q8MM81</accession>
<accession>Q9U3N7</accession>
<keyword id="KW-0025">Alternative splicing</keyword>
<keyword id="KW-0963">Cytoplasm</keyword>
<keyword id="KW-0206">Cytoskeleton</keyword>
<keyword id="KW-0378">Hydrolase</keyword>
<keyword id="KW-0904">Protein phosphatase</keyword>
<keyword id="KW-1185">Reference proteome</keyword>
<protein>
    <recommendedName>
        <fullName>Tyrosine-protein phosphatase 1</fullName>
        <ecNumber>3.1.3.48</ecNumber>
    </recommendedName>
    <alternativeName>
        <fullName>Protein-tyrosine phosphatase 1</fullName>
    </alternativeName>
</protein>
<dbReference type="EC" id="3.1.3.48"/>
<dbReference type="EMBL" id="Z36237">
    <property type="protein sequence ID" value="CAA85272.1"/>
    <property type="molecule type" value="Genomic_DNA"/>
</dbReference>
<dbReference type="EMBL" id="Z48241">
    <property type="protein sequence ID" value="CAA85272.1"/>
    <property type="status" value="JOINED"/>
    <property type="molecule type" value="Genomic_DNA"/>
</dbReference>
<dbReference type="EMBL" id="Z36237">
    <property type="protein sequence ID" value="CAD44107.1"/>
    <property type="molecule type" value="Genomic_DNA"/>
</dbReference>
<dbReference type="EMBL" id="Z48241">
    <property type="protein sequence ID" value="CAD44107.1"/>
    <property type="status" value="JOINED"/>
    <property type="molecule type" value="Genomic_DNA"/>
</dbReference>
<dbReference type="EMBL" id="Z48241">
    <property type="protein sequence ID" value="CAB54194.1"/>
    <property type="molecule type" value="Genomic_DNA"/>
</dbReference>
<dbReference type="EMBL" id="M38013">
    <property type="protein sequence ID" value="AAA28127.1"/>
    <property type="molecule type" value="mRNA"/>
</dbReference>
<dbReference type="PIR" id="T19630">
    <property type="entry name" value="T19630"/>
</dbReference>
<dbReference type="PIR" id="T19631">
    <property type="entry name" value="T19631"/>
</dbReference>
<dbReference type="RefSeq" id="NP_497732.1">
    <molecule id="P28191-1"/>
    <property type="nucleotide sequence ID" value="NM_065331.4"/>
</dbReference>
<dbReference type="RefSeq" id="NP_497733.1">
    <molecule id="P28191-2"/>
    <property type="nucleotide sequence ID" value="NM_065332.4"/>
</dbReference>
<dbReference type="RefSeq" id="NP_741112.1">
    <molecule id="P28191-3"/>
    <property type="nucleotide sequence ID" value="NM_171099.5"/>
</dbReference>
<dbReference type="SMR" id="P28191"/>
<dbReference type="BioGRID" id="40703">
    <property type="interactions" value="3"/>
</dbReference>
<dbReference type="FunCoup" id="P28191">
    <property type="interactions" value="2349"/>
</dbReference>
<dbReference type="STRING" id="6239.C48D5.2a.2"/>
<dbReference type="iPTMnet" id="P28191"/>
<dbReference type="PaxDb" id="6239-C48D5.2a"/>
<dbReference type="PeptideAtlas" id="P28191"/>
<dbReference type="EnsemblMetazoa" id="C48D5.2a.1">
    <molecule id="P28191-1"/>
    <property type="protein sequence ID" value="C48D5.2a.1"/>
    <property type="gene ID" value="WBGene00004213"/>
</dbReference>
<dbReference type="EnsemblMetazoa" id="C48D5.2b.1">
    <molecule id="P28191-2"/>
    <property type="protein sequence ID" value="C48D5.2b.1"/>
    <property type="gene ID" value="WBGene00004213"/>
</dbReference>
<dbReference type="EnsemblMetazoa" id="C48D5.2c.1">
    <molecule id="P28191-3"/>
    <property type="protein sequence ID" value="C48D5.2c.1"/>
    <property type="gene ID" value="WBGene00004213"/>
</dbReference>
<dbReference type="GeneID" id="175463"/>
<dbReference type="KEGG" id="cel:CELE_C48D5.2"/>
<dbReference type="UCSC" id="C48D5.2a">
    <molecule id="P28191-1"/>
    <property type="organism name" value="c. elegans"/>
</dbReference>
<dbReference type="AGR" id="WB:WBGene00004213"/>
<dbReference type="CTD" id="175463"/>
<dbReference type="WormBase" id="C48D5.2a">
    <molecule id="P28191-1"/>
    <property type="protein sequence ID" value="CE17578"/>
    <property type="gene ID" value="WBGene00004213"/>
    <property type="gene designation" value="ptp-1"/>
</dbReference>
<dbReference type="WormBase" id="C48D5.2b">
    <molecule id="P28191-2"/>
    <property type="protein sequence ID" value="CE23603"/>
    <property type="gene ID" value="WBGene00004213"/>
    <property type="gene designation" value="ptp-1"/>
</dbReference>
<dbReference type="WormBase" id="C48D5.2c">
    <molecule id="P28191-3"/>
    <property type="protein sequence ID" value="CE31450"/>
    <property type="gene ID" value="WBGene00004213"/>
    <property type="gene designation" value="ptp-1"/>
</dbReference>
<dbReference type="eggNOG" id="KOG0792">
    <property type="taxonomic scope" value="Eukaryota"/>
</dbReference>
<dbReference type="GeneTree" id="ENSGT00940000166146"/>
<dbReference type="HOGENOM" id="CLU_001645_7_0_1"/>
<dbReference type="InParanoid" id="P28191"/>
<dbReference type="OMA" id="MIRECRH"/>
<dbReference type="OrthoDB" id="5854685at2759"/>
<dbReference type="PhylomeDB" id="P28191"/>
<dbReference type="Reactome" id="R-CEL-182971">
    <property type="pathway name" value="EGFR downregulation"/>
</dbReference>
<dbReference type="Reactome" id="R-CEL-5675221">
    <property type="pathway name" value="Negative regulation of MAPK pathway"/>
</dbReference>
<dbReference type="PRO" id="PR:P28191"/>
<dbReference type="Proteomes" id="UP000001940">
    <property type="component" value="Chromosome III"/>
</dbReference>
<dbReference type="Bgee" id="WBGene00004213">
    <property type="expression patterns" value="Expressed in pharyngeal muscle cell (C elegans) and 3 other cell types or tissues"/>
</dbReference>
<dbReference type="GO" id="GO:0005856">
    <property type="term" value="C:cytoskeleton"/>
    <property type="evidence" value="ECO:0007669"/>
    <property type="project" value="UniProtKB-SubCell"/>
</dbReference>
<dbReference type="GO" id="GO:0016529">
    <property type="term" value="C:sarcoplasmic reticulum"/>
    <property type="evidence" value="ECO:0007005"/>
    <property type="project" value="WormBase"/>
</dbReference>
<dbReference type="GO" id="GO:0008092">
    <property type="term" value="F:cytoskeletal protein binding"/>
    <property type="evidence" value="ECO:0007669"/>
    <property type="project" value="InterPro"/>
</dbReference>
<dbReference type="GO" id="GO:0004725">
    <property type="term" value="F:protein tyrosine phosphatase activity"/>
    <property type="evidence" value="ECO:0000318"/>
    <property type="project" value="GO_Central"/>
</dbReference>
<dbReference type="CDD" id="cd14473">
    <property type="entry name" value="FERM_B-lobe"/>
    <property type="match status" value="1"/>
</dbReference>
<dbReference type="CDD" id="cd13189">
    <property type="entry name" value="FERM_C_PTPN4_PTPN3_like"/>
    <property type="match status" value="1"/>
</dbReference>
<dbReference type="CDD" id="cd17100">
    <property type="entry name" value="FERM_F1_PTPN3_like"/>
    <property type="match status" value="1"/>
</dbReference>
<dbReference type="CDD" id="cd06706">
    <property type="entry name" value="PDZ_PTPN3-4-like"/>
    <property type="match status" value="1"/>
</dbReference>
<dbReference type="CDD" id="cd14541">
    <property type="entry name" value="PTPc-N3_4"/>
    <property type="match status" value="1"/>
</dbReference>
<dbReference type="FunFam" id="2.30.29.30:FF:000002">
    <property type="entry name" value="Band 4.1-like protein 5 isoform 1"/>
    <property type="match status" value="1"/>
</dbReference>
<dbReference type="FunFam" id="2.30.42.10:FF:000045">
    <property type="entry name" value="Tyrosine-protein phosphatase non-receptor type"/>
    <property type="match status" value="1"/>
</dbReference>
<dbReference type="FunFam" id="3.90.190.10:FF:000023">
    <property type="entry name" value="Tyrosine-protein phosphatase non-receptor type"/>
    <property type="match status" value="1"/>
</dbReference>
<dbReference type="Gene3D" id="1.20.80.10">
    <property type="match status" value="1"/>
</dbReference>
<dbReference type="Gene3D" id="2.30.42.10">
    <property type="match status" value="1"/>
</dbReference>
<dbReference type="Gene3D" id="3.10.20.90">
    <property type="entry name" value="Phosphatidylinositol 3-kinase Catalytic Subunit, Chain A, domain 1"/>
    <property type="match status" value="1"/>
</dbReference>
<dbReference type="Gene3D" id="2.30.29.30">
    <property type="entry name" value="Pleckstrin-homology domain (PH domain)/Phosphotyrosine-binding domain (PTB)"/>
    <property type="match status" value="1"/>
</dbReference>
<dbReference type="Gene3D" id="3.90.190.10">
    <property type="entry name" value="Protein tyrosine phosphatase superfamily"/>
    <property type="match status" value="1"/>
</dbReference>
<dbReference type="InterPro" id="IPR019749">
    <property type="entry name" value="Band_41_domain"/>
</dbReference>
<dbReference type="InterPro" id="IPR014847">
    <property type="entry name" value="FA"/>
</dbReference>
<dbReference type="InterPro" id="IPR014352">
    <property type="entry name" value="FERM/acyl-CoA-bd_prot_sf"/>
</dbReference>
<dbReference type="InterPro" id="IPR035963">
    <property type="entry name" value="FERM_2"/>
</dbReference>
<dbReference type="InterPro" id="IPR019748">
    <property type="entry name" value="FERM_central"/>
</dbReference>
<dbReference type="InterPro" id="IPR019747">
    <property type="entry name" value="FERM_CS"/>
</dbReference>
<dbReference type="InterPro" id="IPR000299">
    <property type="entry name" value="FERM_domain"/>
</dbReference>
<dbReference type="InterPro" id="IPR018979">
    <property type="entry name" value="FERM_N"/>
</dbReference>
<dbReference type="InterPro" id="IPR018980">
    <property type="entry name" value="FERM_PH-like_C"/>
</dbReference>
<dbReference type="InterPro" id="IPR001478">
    <property type="entry name" value="PDZ"/>
</dbReference>
<dbReference type="InterPro" id="IPR036034">
    <property type="entry name" value="PDZ_sf"/>
</dbReference>
<dbReference type="InterPro" id="IPR011993">
    <property type="entry name" value="PH-like_dom_sf"/>
</dbReference>
<dbReference type="InterPro" id="IPR029021">
    <property type="entry name" value="Prot-tyrosine_phosphatase-like"/>
</dbReference>
<dbReference type="InterPro" id="IPR000242">
    <property type="entry name" value="PTP_cat"/>
</dbReference>
<dbReference type="InterPro" id="IPR041783">
    <property type="entry name" value="PTPN3/4_FERM_C"/>
</dbReference>
<dbReference type="InterPro" id="IPR016130">
    <property type="entry name" value="Tyr_Pase_AS"/>
</dbReference>
<dbReference type="InterPro" id="IPR003595">
    <property type="entry name" value="Tyr_Pase_cat"/>
</dbReference>
<dbReference type="InterPro" id="IPR000387">
    <property type="entry name" value="Tyr_Pase_dom"/>
</dbReference>
<dbReference type="InterPro" id="IPR012151">
    <property type="entry name" value="Tyr_Pase_non-rcpt_typ-3/4"/>
</dbReference>
<dbReference type="InterPro" id="IPR029071">
    <property type="entry name" value="Ubiquitin-like_domsf"/>
</dbReference>
<dbReference type="PANTHER" id="PTHR45706">
    <property type="entry name" value="TYROSINE-PROTEIN PHOSPHATASE"/>
    <property type="match status" value="1"/>
</dbReference>
<dbReference type="PANTHER" id="PTHR45706:SF4">
    <property type="entry name" value="TYROSINE-PROTEIN PHOSPHATASE"/>
    <property type="match status" value="1"/>
</dbReference>
<dbReference type="Pfam" id="PF08736">
    <property type="entry name" value="FA"/>
    <property type="match status" value="1"/>
</dbReference>
<dbReference type="Pfam" id="PF09380">
    <property type="entry name" value="FERM_C"/>
    <property type="match status" value="1"/>
</dbReference>
<dbReference type="Pfam" id="PF00373">
    <property type="entry name" value="FERM_M"/>
    <property type="match status" value="1"/>
</dbReference>
<dbReference type="Pfam" id="PF09379">
    <property type="entry name" value="FERM_N"/>
    <property type="match status" value="1"/>
</dbReference>
<dbReference type="Pfam" id="PF00595">
    <property type="entry name" value="PDZ"/>
    <property type="match status" value="1"/>
</dbReference>
<dbReference type="Pfam" id="PF00102">
    <property type="entry name" value="Y_phosphatase"/>
    <property type="match status" value="1"/>
</dbReference>
<dbReference type="PIRSF" id="PIRSF000927">
    <property type="entry name" value="Tyr-Ptase_nr3"/>
    <property type="match status" value="1"/>
</dbReference>
<dbReference type="PRINTS" id="PR00935">
    <property type="entry name" value="BAND41"/>
</dbReference>
<dbReference type="PRINTS" id="PR00700">
    <property type="entry name" value="PRTYPHPHTASE"/>
</dbReference>
<dbReference type="SMART" id="SM00295">
    <property type="entry name" value="B41"/>
    <property type="match status" value="1"/>
</dbReference>
<dbReference type="SMART" id="SM01195">
    <property type="entry name" value="FA"/>
    <property type="match status" value="1"/>
</dbReference>
<dbReference type="SMART" id="SM01196">
    <property type="entry name" value="FERM_C"/>
    <property type="match status" value="1"/>
</dbReference>
<dbReference type="SMART" id="SM00228">
    <property type="entry name" value="PDZ"/>
    <property type="match status" value="1"/>
</dbReference>
<dbReference type="SMART" id="SM00194">
    <property type="entry name" value="PTPc"/>
    <property type="match status" value="1"/>
</dbReference>
<dbReference type="SMART" id="SM00404">
    <property type="entry name" value="PTPc_motif"/>
    <property type="match status" value="1"/>
</dbReference>
<dbReference type="SUPFAM" id="SSF52799">
    <property type="entry name" value="(Phosphotyrosine protein) phosphatases II"/>
    <property type="match status" value="1"/>
</dbReference>
<dbReference type="SUPFAM" id="SSF50156">
    <property type="entry name" value="PDZ domain-like"/>
    <property type="match status" value="1"/>
</dbReference>
<dbReference type="SUPFAM" id="SSF50729">
    <property type="entry name" value="PH domain-like"/>
    <property type="match status" value="1"/>
</dbReference>
<dbReference type="SUPFAM" id="SSF47031">
    <property type="entry name" value="Second domain of FERM"/>
    <property type="match status" value="1"/>
</dbReference>
<dbReference type="SUPFAM" id="SSF54236">
    <property type="entry name" value="Ubiquitin-like"/>
    <property type="match status" value="1"/>
</dbReference>
<dbReference type="PROSITE" id="PS00660">
    <property type="entry name" value="FERM_1"/>
    <property type="match status" value="1"/>
</dbReference>
<dbReference type="PROSITE" id="PS00661">
    <property type="entry name" value="FERM_2"/>
    <property type="match status" value="1"/>
</dbReference>
<dbReference type="PROSITE" id="PS50057">
    <property type="entry name" value="FERM_3"/>
    <property type="match status" value="1"/>
</dbReference>
<dbReference type="PROSITE" id="PS50106">
    <property type="entry name" value="PDZ"/>
    <property type="match status" value="1"/>
</dbReference>
<dbReference type="PROSITE" id="PS00383">
    <property type="entry name" value="TYR_PHOSPHATASE_1"/>
    <property type="match status" value="1"/>
</dbReference>
<dbReference type="PROSITE" id="PS50056">
    <property type="entry name" value="TYR_PHOSPHATASE_2"/>
    <property type="match status" value="1"/>
</dbReference>
<dbReference type="PROSITE" id="PS50055">
    <property type="entry name" value="TYR_PHOSPHATASE_PTP"/>
    <property type="match status" value="1"/>
</dbReference>